<reference key="1">
    <citation type="journal article" date="2005" name="Nature">
        <title>The genome sequence of the rice blast fungus Magnaporthe grisea.</title>
        <authorList>
            <person name="Dean R.A."/>
            <person name="Talbot N.J."/>
            <person name="Ebbole D.J."/>
            <person name="Farman M.L."/>
            <person name="Mitchell T.K."/>
            <person name="Orbach M.J."/>
            <person name="Thon M.R."/>
            <person name="Kulkarni R."/>
            <person name="Xu J.-R."/>
            <person name="Pan H."/>
            <person name="Read N.D."/>
            <person name="Lee Y.-H."/>
            <person name="Carbone I."/>
            <person name="Brown D."/>
            <person name="Oh Y.Y."/>
            <person name="Donofrio N."/>
            <person name="Jeong J.S."/>
            <person name="Soanes D.M."/>
            <person name="Djonovic S."/>
            <person name="Kolomiets E."/>
            <person name="Rehmeyer C."/>
            <person name="Li W."/>
            <person name="Harding M."/>
            <person name="Kim S."/>
            <person name="Lebrun M.-H."/>
            <person name="Bohnert H."/>
            <person name="Coughlan S."/>
            <person name="Butler J."/>
            <person name="Calvo S.E."/>
            <person name="Ma L.-J."/>
            <person name="Nicol R."/>
            <person name="Purcell S."/>
            <person name="Nusbaum C."/>
            <person name="Galagan J.E."/>
            <person name="Birren B.W."/>
        </authorList>
    </citation>
    <scope>NUCLEOTIDE SEQUENCE [LARGE SCALE GENOMIC DNA]</scope>
    <source>
        <strain>70-15 / ATCC MYA-4617 / FGSC 8958</strain>
    </source>
</reference>
<protein>
    <recommendedName>
        <fullName>Pre-mRNA-splicing factor SLU7</fullName>
    </recommendedName>
</protein>
<name>SLU7_PYRO7</name>
<organism>
    <name type="scientific">Pyricularia oryzae (strain 70-15 / ATCC MYA-4617 / FGSC 8958)</name>
    <name type="common">Rice blast fungus</name>
    <name type="synonym">Magnaporthe oryzae</name>
    <dbReference type="NCBI Taxonomy" id="242507"/>
    <lineage>
        <taxon>Eukaryota</taxon>
        <taxon>Fungi</taxon>
        <taxon>Dikarya</taxon>
        <taxon>Ascomycota</taxon>
        <taxon>Pezizomycotina</taxon>
        <taxon>Sordariomycetes</taxon>
        <taxon>Sordariomycetidae</taxon>
        <taxon>Magnaporthales</taxon>
        <taxon>Pyriculariaceae</taxon>
        <taxon>Pyricularia</taxon>
    </lineage>
</organism>
<gene>
    <name type="primary">SLU7</name>
    <name type="ORF">MGCH7_ch7g764</name>
    <name type="ORF">MGG_02985</name>
</gene>
<dbReference type="EMBL" id="CM000230">
    <property type="protein sequence ID" value="EAQ71357.1"/>
    <property type="molecule type" value="Genomic_DNA"/>
</dbReference>
<dbReference type="EMBL" id="CM001237">
    <property type="protein sequence ID" value="EHA45971.1"/>
    <property type="molecule type" value="Genomic_DNA"/>
</dbReference>
<dbReference type="RefSeq" id="XP_003720714.1">
    <property type="nucleotide sequence ID" value="XM_003720666.1"/>
</dbReference>
<dbReference type="SMR" id="Q51LA6"/>
<dbReference type="FunCoup" id="Q51LA6">
    <property type="interactions" value="479"/>
</dbReference>
<dbReference type="STRING" id="242507.Q51LA6"/>
<dbReference type="EnsemblFungi" id="MGG_02985T0">
    <property type="protein sequence ID" value="MGG_02985T0"/>
    <property type="gene ID" value="MGG_02985"/>
</dbReference>
<dbReference type="GeneID" id="2682538"/>
<dbReference type="KEGG" id="mgr:MGG_02985"/>
<dbReference type="VEuPathDB" id="FungiDB:MGG_02985"/>
<dbReference type="eggNOG" id="KOG2560">
    <property type="taxonomic scope" value="Eukaryota"/>
</dbReference>
<dbReference type="HOGENOM" id="CLU_019317_3_1_1"/>
<dbReference type="InParanoid" id="Q51LA6"/>
<dbReference type="OMA" id="KYAWESQ"/>
<dbReference type="OrthoDB" id="249612at2759"/>
<dbReference type="Proteomes" id="UP000009058">
    <property type="component" value="Chromosome 7"/>
</dbReference>
<dbReference type="GO" id="GO:0005681">
    <property type="term" value="C:spliceosomal complex"/>
    <property type="evidence" value="ECO:0007669"/>
    <property type="project" value="UniProtKB-KW"/>
</dbReference>
<dbReference type="GO" id="GO:0030628">
    <property type="term" value="F:pre-mRNA 3'-splice site binding"/>
    <property type="evidence" value="ECO:0007669"/>
    <property type="project" value="InterPro"/>
</dbReference>
<dbReference type="GO" id="GO:0008270">
    <property type="term" value="F:zinc ion binding"/>
    <property type="evidence" value="ECO:0007669"/>
    <property type="project" value="UniProtKB-KW"/>
</dbReference>
<dbReference type="GO" id="GO:0000398">
    <property type="term" value="P:mRNA splicing, via spliceosome"/>
    <property type="evidence" value="ECO:0007669"/>
    <property type="project" value="InterPro"/>
</dbReference>
<dbReference type="InterPro" id="IPR021715">
    <property type="entry name" value="Slu7_dom"/>
</dbReference>
<dbReference type="InterPro" id="IPR039974">
    <property type="entry name" value="Splicing_factor_SLU7"/>
</dbReference>
<dbReference type="PANTHER" id="PTHR12942:SF2">
    <property type="entry name" value="PRE-MRNA-SPLICING FACTOR SLU7"/>
    <property type="match status" value="1"/>
</dbReference>
<dbReference type="PANTHER" id="PTHR12942">
    <property type="entry name" value="STEP II SPLICING FACTOR SLU7"/>
    <property type="match status" value="1"/>
</dbReference>
<dbReference type="Pfam" id="PF11708">
    <property type="entry name" value="Slu7"/>
    <property type="match status" value="1"/>
</dbReference>
<accession>Q51LA6</accession>
<accession>A4RB73</accession>
<accession>G4NL38</accession>
<accession>Q2KFC2</accession>
<feature type="chain" id="PRO_0000218550" description="Pre-mRNA-splicing factor SLU7">
    <location>
        <begin position="1"/>
        <end position="474"/>
    </location>
</feature>
<feature type="zinc finger region" description="CCHC-type">
    <location>
        <begin position="78"/>
        <end position="95"/>
    </location>
</feature>
<feature type="region of interest" description="Disordered" evidence="2">
    <location>
        <begin position="263"/>
        <end position="296"/>
    </location>
</feature>
<feature type="region of interest" description="Disordered" evidence="2">
    <location>
        <begin position="395"/>
        <end position="437"/>
    </location>
</feature>
<feature type="region of interest" description="Disordered" evidence="2">
    <location>
        <begin position="453"/>
        <end position="474"/>
    </location>
</feature>
<feature type="compositionally biased region" description="Basic and acidic residues" evidence="2">
    <location>
        <begin position="280"/>
        <end position="296"/>
    </location>
</feature>
<feature type="compositionally biased region" description="Basic and acidic residues" evidence="2">
    <location>
        <begin position="410"/>
        <end position="421"/>
    </location>
</feature>
<keyword id="KW-0479">Metal-binding</keyword>
<keyword id="KW-0507">mRNA processing</keyword>
<keyword id="KW-0508">mRNA splicing</keyword>
<keyword id="KW-0539">Nucleus</keyword>
<keyword id="KW-1185">Reference proteome</keyword>
<keyword id="KW-0747">Spliceosome</keyword>
<keyword id="KW-0862">Zinc</keyword>
<keyword id="KW-0863">Zinc-finger</keyword>
<comment type="function">
    <text evidence="1">Involved in pre-mRNA splicing.</text>
</comment>
<comment type="subunit">
    <text evidence="1">Associated with the spliceosome.</text>
</comment>
<comment type="subcellular location">
    <subcellularLocation>
        <location evidence="1">Nucleus</location>
    </subcellularLocation>
</comment>
<comment type="similarity">
    <text evidence="3">Belongs to the SLU7 family.</text>
</comment>
<evidence type="ECO:0000250" key="1"/>
<evidence type="ECO:0000256" key="2">
    <source>
        <dbReference type="SAM" id="MobiDB-lite"/>
    </source>
</evidence>
<evidence type="ECO:0000305" key="3"/>
<proteinExistence type="inferred from homology"/>
<sequence>MPPPPPPPRRPALGAAGASKEENVYIPNFISKRPFYAVDEGENTDYLEHQRIQKKEKDTGWYDRGKTLGPAATKYRKGACENCGAMTHKVKDCLSRPRAKGAKWTGRDIKADELVQDVRMGWDAKRDRWNGYDAREYQAVVEDYNKMEELRKEMQAKAAAESGKAIEDGDHYAETSDMSKHQPTSTRQLRLREDTAKYLLNLDLDSAKYDPKTRTIVDAGATNDKTAELYAEQGFLRQSGDAAEFEKAQRYAWEAQEKGGDTSLHLQANPTAGSYMRKKLKEEEDAKREERERQLREKYGGEETKVLPDAIRQMAVTESERYVEYDEIGLIKGGPKGVARSKYKEDIFHNNHTSVWGSWWSDFKWGYACCHSFVKNSYCTGEEGKAAWEAAERQRTGSGLLEPAADAEVDGAREEERKASEAETAAAAKEKAKKRTAEQMIGDVTEAELDEYRRKRTNTDDPMAQLLGRDELVT</sequence>